<reference key="1">
    <citation type="journal article" date="1996" name="Genomics">
        <title>Characterization of novel secreted and membrane proteins isolated by the signal sequence trap method.</title>
        <authorList>
            <person name="Shirozu M."/>
            <person name="Tada H."/>
            <person name="Tashiro K."/>
            <person name="Nakamura T."/>
            <person name="Lopez N.D."/>
            <person name="Nazarea M."/>
            <person name="Hamada T."/>
            <person name="Sato T."/>
            <person name="Nakano T."/>
            <person name="Honjo T."/>
        </authorList>
    </citation>
    <scope>NUCLEOTIDE SEQUENCE [MRNA]</scope>
    <source>
        <tissue>Bone marrow stroma</tissue>
    </source>
</reference>
<reference key="2">
    <citation type="journal article" date="1997" name="Proc. Natl. Acad. Sci. U.S.A.">
        <title>A family of secreted proteins contains homology to the cysteine-rich ligand-binding domain of frizzled receptors.</title>
        <authorList>
            <person name="Rattner A."/>
            <person name="Hsieh J.-C."/>
            <person name="Smallwood P.M."/>
            <person name="Gilbert D.J."/>
            <person name="Copeland N.G."/>
            <person name="Jenkins N.A."/>
            <person name="Nathans J."/>
        </authorList>
    </citation>
    <scope>NUCLEOTIDE SEQUENCE [MRNA]</scope>
    <scope>TISSUE SPECIFICITY</scope>
    <source>
        <strain>C57BL/6J</strain>
        <tissue>Embryonic eye</tissue>
    </source>
</reference>
<reference key="3">
    <citation type="journal article" date="1997" name="Proc. Natl. Acad. Sci. U.S.A.">
        <title>SARPs: a family of secreted apoptosis-related proteins.</title>
        <authorList>
            <person name="Melkonyan H.S."/>
            <person name="Chang W.C."/>
            <person name="Shapiro J.P."/>
            <person name="Mahadevappa M."/>
            <person name="Fitzpatrick P.A."/>
            <person name="Kiefer M.C."/>
            <person name="Tomei L.D."/>
            <person name="Umansky S.R."/>
        </authorList>
    </citation>
    <scope>NUCLEOTIDE SEQUENCE [MRNA]</scope>
    <source>
        <tissue>Pancreas</tissue>
    </source>
</reference>
<reference key="4">
    <citation type="journal article" date="2004" name="Genome Res.">
        <title>The status, quality, and expansion of the NIH full-length cDNA project: the Mammalian Gene Collection (MGC).</title>
        <authorList>
            <consortium name="The MGC Project Team"/>
        </authorList>
    </citation>
    <scope>NUCLEOTIDE SEQUENCE [LARGE SCALE MRNA]</scope>
    <source>
        <strain>FVB/N</strain>
        <tissue>Mammary tumor</tissue>
    </source>
</reference>
<reference key="5">
    <citation type="journal article" date="1998" name="Mech. Dev.">
        <title>Developmental expression patterns of mouse sFRP genes encoding members of the secreted frizzled related protein family.</title>
        <authorList>
            <person name="Leimeister C."/>
            <person name="Bach A."/>
            <person name="Gessler M."/>
        </authorList>
    </citation>
    <scope>DEVELOPMENTAL STAGE</scope>
</reference>
<reference key="6">
    <citation type="journal article" date="2004" name="PLoS Biol.">
        <title>Genomic analysis of mouse retinal development.</title>
        <authorList>
            <person name="Blackshaw S."/>
            <person name="Harpavat S."/>
            <person name="Trimarchi J."/>
            <person name="Cai L."/>
            <person name="Huang H."/>
            <person name="Kuo W.P."/>
            <person name="Weber G."/>
            <person name="Lee K."/>
            <person name="Fraioli R.E."/>
            <person name="Cho S.-H."/>
            <person name="Yung R."/>
            <person name="Asch E."/>
            <person name="Ohno-Machado L."/>
            <person name="Wong W.H."/>
            <person name="Cepko C.L."/>
        </authorList>
    </citation>
    <scope>DEVELOPMENTAL STAGE</scope>
</reference>
<reference key="7">
    <citation type="journal article" date="2016" name="Dev. Biol.">
        <title>Bmp4-Msx1 signaling and Osr2 control tooth organogenesis through antagonistic regulation of secreted Wnt antagonists.</title>
        <authorList>
            <person name="Jia S."/>
            <person name="Kwon H.E."/>
            <person name="Lan Y."/>
            <person name="Zhou J."/>
            <person name="Liu H."/>
            <person name="Jiang R."/>
        </authorList>
    </citation>
    <scope>DEVELOPMENTAL STAGE</scope>
</reference>
<name>SFRP2_MOUSE</name>
<evidence type="ECO:0000250" key="1"/>
<evidence type="ECO:0000255" key="2"/>
<evidence type="ECO:0000255" key="3">
    <source>
        <dbReference type="PROSITE-ProRule" id="PRU00090"/>
    </source>
</evidence>
<evidence type="ECO:0000255" key="4">
    <source>
        <dbReference type="PROSITE-ProRule" id="PRU00295"/>
    </source>
</evidence>
<evidence type="ECO:0000269" key="5">
    <source>
    </source>
</evidence>
<evidence type="ECO:0000269" key="6">
    <source>
    </source>
</evidence>
<evidence type="ECO:0000269" key="7">
    <source>
    </source>
</evidence>
<evidence type="ECO:0000269" key="8">
    <source>
    </source>
</evidence>
<evidence type="ECO:0000303" key="9">
    <source>
    </source>
</evidence>
<evidence type="ECO:0000305" key="10"/>
<evidence type="ECO:0000312" key="11">
    <source>
        <dbReference type="MGI" id="MGI:108078"/>
    </source>
</evidence>
<keyword id="KW-0217">Developmental protein</keyword>
<keyword id="KW-0221">Differentiation</keyword>
<keyword id="KW-1015">Disulfide bond</keyword>
<keyword id="KW-1185">Reference proteome</keyword>
<keyword id="KW-0964">Secreted</keyword>
<keyword id="KW-0732">Signal</keyword>
<keyword id="KW-0879">Wnt signaling pathway</keyword>
<comment type="function">
    <text>Soluble frizzled-related proteins (sFRPS) function as modulators of Wnt signaling through direct interaction with Wnts. They have a role in regulating cell growth and differentiation in specific cell types. SFRP2 may be important for eye retinal development and for myogenesis.</text>
</comment>
<comment type="interaction">
    <interactant intactId="EBI-15892646">
        <id>P97299</id>
    </interactant>
    <interactant intactId="EBI-12509497">
        <id>P13497-2</id>
        <label>BMP1</label>
    </interactant>
    <organismsDiffer>true</organismsDiffer>
    <experiments>2</experiments>
</comment>
<comment type="subcellular location">
    <subcellularLocation>
        <location>Secreted</location>
    </subcellularLocation>
</comment>
<comment type="tissue specificity">
    <text evidence="7">Highly expressed in the eye. Weaker expression in heart and lung.</text>
</comment>
<comment type="developmental stage">
    <text evidence="5 6 8">During kidney development, expressed at 10.5 dpc in the mesonephric tubules, and at 12.5 dpc strongly expressed in the comma shaped bodies and surrounding ureter stalk. In 14.5 dpc kidney, expressed in the S-shaped bodies. In the developing nervous system, expressed in the presumptive hindbrain and the ventral part of the neural tube from 8.0 dpc onwards. At 9.5 dpc, expression is additionally detected in the mesonephros and the optic vesicle. 10 dpc expression is found in the second and third branchial cleft, in the eye, the ventral neural tube and specific rhombomeres and prosomers. 10.5 dpc brain shows specific expression in the basal and alar plate. In developing eye, expressed at 9.0 dpc in the optic placode, and at 9.5 dpc in the optic vesicle. By 10.5 dpc, expression found in the lens vesicle and the inner layer of the invaginating optic vesicle. Strong expression at 14.5 dpc in the anterior lens epithelium, decreasing thereafter. Expression also found in the prospective neural retina. In developing limbs, expression found at 11.5 dpc in the shoulder and at the distal end of the cartilaginous condensation. At 12.5 dpc, expressed in the foot and hand paddle extending along the digital rays. Expressed, at 13.5 dpc and 14.5 dpc, in the forelimb and hindlimb where the interphalangeal joints will develop. Also expressed at 14.5 dpc between the sternal bands and where the ribs contact the sternum. In other developing structures, expression found at 11.5 dpc, in the maxillary and mandibular component of the first branchial arch, and later, in the loose mesenchyme surrounding cartilage and epithelia of the skull as well as in the whisker follicles. Expressed in the oral mesenchyme lingual to the developing mandibular tooth buds at 13.5 dpc (PubMed:27713059). Expressed in developing teeth, with the highest levels at 15.5 dpc and 16.5 dpc in the mesenchyme and the dental epithelium of the developing molars. Expressed in development smooth muscle surrounding the esophagus at 11.5 dpc, the dorsal aorta and the ductus arteriosus at 14.5 dpc, and the ureter stalk at 15.5 dpc.</text>
</comment>
<comment type="domain">
    <text evidence="1">The FZ domain is involved in binding with Wnt ligands.</text>
</comment>
<comment type="similarity">
    <text evidence="10">Belongs to the secreted frizzled-related protein (sFRP) family.</text>
</comment>
<accession>P97299</accession>
<accession>O08862</accession>
<accession>O35297</accession>
<organism>
    <name type="scientific">Mus musculus</name>
    <name type="common">Mouse</name>
    <dbReference type="NCBI Taxonomy" id="10090"/>
    <lineage>
        <taxon>Eukaryota</taxon>
        <taxon>Metazoa</taxon>
        <taxon>Chordata</taxon>
        <taxon>Craniata</taxon>
        <taxon>Vertebrata</taxon>
        <taxon>Euteleostomi</taxon>
        <taxon>Mammalia</taxon>
        <taxon>Eutheria</taxon>
        <taxon>Euarchontoglires</taxon>
        <taxon>Glires</taxon>
        <taxon>Rodentia</taxon>
        <taxon>Myomorpha</taxon>
        <taxon>Muroidea</taxon>
        <taxon>Muridae</taxon>
        <taxon>Murinae</taxon>
        <taxon>Mus</taxon>
        <taxon>Mus</taxon>
    </lineage>
</organism>
<dbReference type="EMBL" id="D50462">
    <property type="protein sequence ID" value="BAA09053.1"/>
    <property type="molecule type" value="mRNA"/>
</dbReference>
<dbReference type="EMBL" id="U88567">
    <property type="protein sequence ID" value="AAC53146.1"/>
    <property type="molecule type" value="mRNA"/>
</dbReference>
<dbReference type="EMBL" id="AF017989">
    <property type="protein sequence ID" value="AAB70795.1"/>
    <property type="molecule type" value="mRNA"/>
</dbReference>
<dbReference type="EMBL" id="BC014722">
    <property type="protein sequence ID" value="AAH14722.1"/>
    <property type="molecule type" value="mRNA"/>
</dbReference>
<dbReference type="CCDS" id="CCDS17434.1"/>
<dbReference type="RefSeq" id="NP_033170.1">
    <property type="nucleotide sequence ID" value="NM_009144.2"/>
</dbReference>
<dbReference type="SMR" id="P97299"/>
<dbReference type="BioGRID" id="203142">
    <property type="interactions" value="9"/>
</dbReference>
<dbReference type="DIP" id="DIP-59486N"/>
<dbReference type="FunCoup" id="P97299">
    <property type="interactions" value="580"/>
</dbReference>
<dbReference type="IntAct" id="P97299">
    <property type="interactions" value="1"/>
</dbReference>
<dbReference type="STRING" id="10090.ENSMUSP00000029625"/>
<dbReference type="MEROPS" id="I93.002"/>
<dbReference type="iPTMnet" id="P97299"/>
<dbReference type="PhosphoSitePlus" id="P97299"/>
<dbReference type="jPOST" id="P97299"/>
<dbReference type="PaxDb" id="10090-ENSMUSP00000029625"/>
<dbReference type="ProteomicsDB" id="256972"/>
<dbReference type="Antibodypedia" id="983">
    <property type="antibodies" value="357 antibodies from 37 providers"/>
</dbReference>
<dbReference type="DNASU" id="20319"/>
<dbReference type="Ensembl" id="ENSMUST00000029625.8">
    <property type="protein sequence ID" value="ENSMUSP00000029625.8"/>
    <property type="gene ID" value="ENSMUSG00000027996.14"/>
</dbReference>
<dbReference type="GeneID" id="20319"/>
<dbReference type="KEGG" id="mmu:20319"/>
<dbReference type="UCSC" id="uc008ppl.2">
    <property type="organism name" value="mouse"/>
</dbReference>
<dbReference type="AGR" id="MGI:108078"/>
<dbReference type="CTD" id="6423"/>
<dbReference type="MGI" id="MGI:108078">
    <property type="gene designation" value="Sfrp2"/>
</dbReference>
<dbReference type="VEuPathDB" id="HostDB:ENSMUSG00000027996"/>
<dbReference type="eggNOG" id="KOG3577">
    <property type="taxonomic scope" value="Eukaryota"/>
</dbReference>
<dbReference type="GeneTree" id="ENSGT00940000156432"/>
<dbReference type="HOGENOM" id="CLU_054647_0_0_1"/>
<dbReference type="InParanoid" id="P97299"/>
<dbReference type="OMA" id="NFGQHDL"/>
<dbReference type="OrthoDB" id="5985572at2759"/>
<dbReference type="PhylomeDB" id="P97299"/>
<dbReference type="TreeFam" id="TF350133"/>
<dbReference type="BioGRID-ORCS" id="20319">
    <property type="hits" value="2 hits in 76 CRISPR screens"/>
</dbReference>
<dbReference type="ChiTaRS" id="Sfrp2">
    <property type="organism name" value="mouse"/>
</dbReference>
<dbReference type="PRO" id="PR:P97299"/>
<dbReference type="Proteomes" id="UP000000589">
    <property type="component" value="Chromosome 3"/>
</dbReference>
<dbReference type="RNAct" id="P97299">
    <property type="molecule type" value="protein"/>
</dbReference>
<dbReference type="Bgee" id="ENSMUSG00000027996">
    <property type="expression patterns" value="Expressed in ureter smooth muscle and 270 other cell types or tissues"/>
</dbReference>
<dbReference type="ExpressionAtlas" id="P97299">
    <property type="expression patterns" value="baseline and differential"/>
</dbReference>
<dbReference type="GO" id="GO:0005576">
    <property type="term" value="C:extracellular region"/>
    <property type="evidence" value="ECO:0000304"/>
    <property type="project" value="Reactome"/>
</dbReference>
<dbReference type="GO" id="GO:0005615">
    <property type="term" value="C:extracellular space"/>
    <property type="evidence" value="ECO:0000314"/>
    <property type="project" value="UniProtKB"/>
</dbReference>
<dbReference type="GO" id="GO:0061133">
    <property type="term" value="F:endopeptidase activator activity"/>
    <property type="evidence" value="ECO:0000314"/>
    <property type="project" value="MGI"/>
</dbReference>
<dbReference type="GO" id="GO:0008047">
    <property type="term" value="F:enzyme activator activity"/>
    <property type="evidence" value="ECO:0000314"/>
    <property type="project" value="MGI"/>
</dbReference>
<dbReference type="GO" id="GO:0048018">
    <property type="term" value="F:receptor ligand activity"/>
    <property type="evidence" value="ECO:0000314"/>
    <property type="project" value="BHF-UCL"/>
</dbReference>
<dbReference type="GO" id="GO:0017147">
    <property type="term" value="F:Wnt-protein binding"/>
    <property type="evidence" value="ECO:0000353"/>
    <property type="project" value="MGI"/>
</dbReference>
<dbReference type="GO" id="GO:0009952">
    <property type="term" value="P:anterior/posterior pattern specification"/>
    <property type="evidence" value="ECO:0000316"/>
    <property type="project" value="MGI"/>
</dbReference>
<dbReference type="GO" id="GO:0006915">
    <property type="term" value="P:apoptotic process"/>
    <property type="evidence" value="ECO:0000315"/>
    <property type="project" value="MGI"/>
</dbReference>
<dbReference type="GO" id="GO:0030509">
    <property type="term" value="P:BMP signaling pathway"/>
    <property type="evidence" value="ECO:0000316"/>
    <property type="project" value="MGI"/>
</dbReference>
<dbReference type="GO" id="GO:0001569">
    <property type="term" value="P:branching involved in blood vessel morphogenesis"/>
    <property type="evidence" value="ECO:0000314"/>
    <property type="project" value="BHF-UCL"/>
</dbReference>
<dbReference type="GO" id="GO:0060070">
    <property type="term" value="P:canonical Wnt signaling pathway"/>
    <property type="evidence" value="ECO:0000314"/>
    <property type="project" value="BHF-UCL"/>
</dbReference>
<dbReference type="GO" id="GO:0003214">
    <property type="term" value="P:cardiac left ventricle morphogenesis"/>
    <property type="evidence" value="ECO:0007669"/>
    <property type="project" value="Ensembl"/>
</dbReference>
<dbReference type="GO" id="GO:0010659">
    <property type="term" value="P:cardiac muscle cell apoptotic process"/>
    <property type="evidence" value="ECO:0000314"/>
    <property type="project" value="MGI"/>
</dbReference>
<dbReference type="GO" id="GO:0051216">
    <property type="term" value="P:cartilage development"/>
    <property type="evidence" value="ECO:0000315"/>
    <property type="project" value="MGI"/>
</dbReference>
<dbReference type="GO" id="GO:0071481">
    <property type="term" value="P:cellular response to X-ray"/>
    <property type="evidence" value="ECO:0000314"/>
    <property type="project" value="UniProtKB"/>
</dbReference>
<dbReference type="GO" id="GO:0002063">
    <property type="term" value="P:chondrocyte development"/>
    <property type="evidence" value="ECO:0000315"/>
    <property type="project" value="MGI"/>
</dbReference>
<dbReference type="GO" id="GO:0030199">
    <property type="term" value="P:collagen fibril organization"/>
    <property type="evidence" value="ECO:0000315"/>
    <property type="project" value="MGI"/>
</dbReference>
<dbReference type="GO" id="GO:0060028">
    <property type="term" value="P:convergent extension involved in axis elongation"/>
    <property type="evidence" value="ECO:0000316"/>
    <property type="project" value="MGI"/>
</dbReference>
<dbReference type="GO" id="GO:0046546">
    <property type="term" value="P:development of primary male sexual characteristics"/>
    <property type="evidence" value="ECO:0000316"/>
    <property type="project" value="MGI"/>
</dbReference>
<dbReference type="GO" id="GO:0048546">
    <property type="term" value="P:digestive tract morphogenesis"/>
    <property type="evidence" value="ECO:0000316"/>
    <property type="project" value="MGI"/>
</dbReference>
<dbReference type="GO" id="GO:0042733">
    <property type="term" value="P:embryonic digit morphogenesis"/>
    <property type="evidence" value="ECO:0000315"/>
    <property type="project" value="MGI"/>
</dbReference>
<dbReference type="GO" id="GO:0071425">
    <property type="term" value="P:hematopoietic stem cell proliferation"/>
    <property type="evidence" value="ECO:0000314"/>
    <property type="project" value="UniProtKB"/>
</dbReference>
<dbReference type="GO" id="GO:0008584">
    <property type="term" value="P:male gonad development"/>
    <property type="evidence" value="ECO:0000316"/>
    <property type="project" value="MGI"/>
</dbReference>
<dbReference type="GO" id="GO:0007501">
    <property type="term" value="P:mesodermal cell fate specification"/>
    <property type="evidence" value="ECO:0000316"/>
    <property type="project" value="MGI"/>
</dbReference>
<dbReference type="GO" id="GO:0030514">
    <property type="term" value="P:negative regulation of BMP signaling pathway"/>
    <property type="evidence" value="ECO:0000314"/>
    <property type="project" value="MGI"/>
</dbReference>
<dbReference type="GO" id="GO:0090090">
    <property type="term" value="P:negative regulation of canonical Wnt signaling pathway"/>
    <property type="evidence" value="ECO:0000314"/>
    <property type="project" value="MGI"/>
</dbReference>
<dbReference type="GO" id="GO:0010667">
    <property type="term" value="P:negative regulation of cardiac muscle cell apoptotic process"/>
    <property type="evidence" value="ECO:0000314"/>
    <property type="project" value="MGI"/>
</dbReference>
<dbReference type="GO" id="GO:0030308">
    <property type="term" value="P:negative regulation of cell growth"/>
    <property type="evidence" value="ECO:0007669"/>
    <property type="project" value="Ensembl"/>
</dbReference>
<dbReference type="GO" id="GO:0030336">
    <property type="term" value="P:negative regulation of cell migration"/>
    <property type="evidence" value="ECO:0000314"/>
    <property type="project" value="UniProtKB"/>
</dbReference>
<dbReference type="GO" id="GO:0061185">
    <property type="term" value="P:negative regulation of dermatome development"/>
    <property type="evidence" value="ECO:0000314"/>
    <property type="project" value="BHF-UCL"/>
</dbReference>
<dbReference type="GO" id="GO:0045892">
    <property type="term" value="P:negative regulation of DNA-templated transcription"/>
    <property type="evidence" value="ECO:0007669"/>
    <property type="project" value="Ensembl"/>
</dbReference>
<dbReference type="GO" id="GO:0050680">
    <property type="term" value="P:negative regulation of epithelial cell proliferation"/>
    <property type="evidence" value="ECO:0007669"/>
    <property type="project" value="Ensembl"/>
</dbReference>
<dbReference type="GO" id="GO:0010719">
    <property type="term" value="P:negative regulation of epithelial to mesenchymal transition"/>
    <property type="evidence" value="ECO:0007669"/>
    <property type="project" value="Ensembl"/>
</dbReference>
<dbReference type="GO" id="GO:1902042">
    <property type="term" value="P:negative regulation of extrinsic apoptotic signaling pathway via death domain receptors"/>
    <property type="evidence" value="ECO:0000314"/>
    <property type="project" value="BHF-UCL"/>
</dbReference>
<dbReference type="GO" id="GO:0010629">
    <property type="term" value="P:negative regulation of gene expression"/>
    <property type="evidence" value="ECO:0000314"/>
    <property type="project" value="UniProtKB"/>
</dbReference>
<dbReference type="GO" id="GO:0042662">
    <property type="term" value="P:negative regulation of mesodermal cell fate specification"/>
    <property type="evidence" value="ECO:0000316"/>
    <property type="project" value="MGI"/>
</dbReference>
<dbReference type="GO" id="GO:0050732">
    <property type="term" value="P:negative regulation of peptidyl-tyrosine phosphorylation"/>
    <property type="evidence" value="ECO:0000314"/>
    <property type="project" value="UniProtKB"/>
</dbReference>
<dbReference type="GO" id="GO:0030178">
    <property type="term" value="P:negative regulation of Wnt signaling pathway"/>
    <property type="evidence" value="ECO:0000314"/>
    <property type="project" value="BHF-UCL"/>
</dbReference>
<dbReference type="GO" id="GO:0001843">
    <property type="term" value="P:neural tube closure"/>
    <property type="evidence" value="ECO:0000316"/>
    <property type="project" value="MGI"/>
</dbReference>
<dbReference type="GO" id="GO:0021915">
    <property type="term" value="P:neural tube development"/>
    <property type="evidence" value="ECO:0000316"/>
    <property type="project" value="MGI"/>
</dbReference>
<dbReference type="GO" id="GO:0003151">
    <property type="term" value="P:outflow tract morphogenesis"/>
    <property type="evidence" value="ECO:0007669"/>
    <property type="project" value="Ensembl"/>
</dbReference>
<dbReference type="GO" id="GO:0045766">
    <property type="term" value="P:positive regulation of angiogenesis"/>
    <property type="evidence" value="ECO:0000314"/>
    <property type="project" value="BHF-UCL"/>
</dbReference>
<dbReference type="GO" id="GO:0043065">
    <property type="term" value="P:positive regulation of apoptotic process"/>
    <property type="evidence" value="ECO:0007669"/>
    <property type="project" value="Ensembl"/>
</dbReference>
<dbReference type="GO" id="GO:0090263">
    <property type="term" value="P:positive regulation of canonical Wnt signaling pathway"/>
    <property type="evidence" value="ECO:0000314"/>
    <property type="project" value="ParkinsonsUK-UCL"/>
</dbReference>
<dbReference type="GO" id="GO:0030307">
    <property type="term" value="P:positive regulation of cell growth"/>
    <property type="evidence" value="ECO:0000314"/>
    <property type="project" value="UniProtKB"/>
</dbReference>
<dbReference type="GO" id="GO:0008284">
    <property type="term" value="P:positive regulation of cell population proliferation"/>
    <property type="evidence" value="ECO:0000314"/>
    <property type="project" value="UniProtKB"/>
</dbReference>
<dbReference type="GO" id="GO:0045600">
    <property type="term" value="P:positive regulation of fat cell differentiation"/>
    <property type="evidence" value="ECO:0000266"/>
    <property type="project" value="MGI"/>
</dbReference>
<dbReference type="GO" id="GO:0045669">
    <property type="term" value="P:positive regulation of osteoblast differentiation"/>
    <property type="evidence" value="ECO:0000316"/>
    <property type="project" value="MGI"/>
</dbReference>
<dbReference type="GO" id="GO:0045944">
    <property type="term" value="P:positive regulation of transcription by RNA polymerase II"/>
    <property type="evidence" value="ECO:0000314"/>
    <property type="project" value="BHF-UCL"/>
</dbReference>
<dbReference type="GO" id="GO:0036342">
    <property type="term" value="P:post-anal tail morphogenesis"/>
    <property type="evidence" value="ECO:0000315"/>
    <property type="project" value="MGI"/>
</dbReference>
<dbReference type="GO" id="GO:0042981">
    <property type="term" value="P:regulation of apoptotic process"/>
    <property type="evidence" value="ECO:0000315"/>
    <property type="project" value="MGI"/>
</dbReference>
<dbReference type="GO" id="GO:0042127">
    <property type="term" value="P:regulation of cell population proliferation"/>
    <property type="evidence" value="ECO:0000315"/>
    <property type="project" value="MGI"/>
</dbReference>
<dbReference type="GO" id="GO:0090175">
    <property type="term" value="P:regulation of establishment of planar polarity"/>
    <property type="evidence" value="ECO:0000316"/>
    <property type="project" value="MGI"/>
</dbReference>
<dbReference type="GO" id="GO:1904956">
    <property type="term" value="P:regulation of midbrain dopaminergic neuron differentiation"/>
    <property type="evidence" value="ECO:0000316"/>
    <property type="project" value="ParkinsonsUK-UCL"/>
</dbReference>
<dbReference type="GO" id="GO:0010975">
    <property type="term" value="P:regulation of neuron projection development"/>
    <property type="evidence" value="ECO:0000314"/>
    <property type="project" value="ParkinsonsUK-UCL"/>
</dbReference>
<dbReference type="GO" id="GO:2000035">
    <property type="term" value="P:regulation of stem cell division"/>
    <property type="evidence" value="ECO:0000314"/>
    <property type="project" value="UniProtKB"/>
</dbReference>
<dbReference type="GO" id="GO:0030111">
    <property type="term" value="P:regulation of Wnt signaling pathway"/>
    <property type="evidence" value="ECO:0000314"/>
    <property type="project" value="UniProtKB"/>
</dbReference>
<dbReference type="GO" id="GO:0007584">
    <property type="term" value="P:response to nutrient"/>
    <property type="evidence" value="ECO:0007669"/>
    <property type="project" value="Ensembl"/>
</dbReference>
<dbReference type="GO" id="GO:0009410">
    <property type="term" value="P:response to xenobiotic stimulus"/>
    <property type="evidence" value="ECO:0000314"/>
    <property type="project" value="UniProtKB"/>
</dbReference>
<dbReference type="GO" id="GO:0061056">
    <property type="term" value="P:sclerotome development"/>
    <property type="evidence" value="ECO:0000270"/>
    <property type="project" value="BHF-UCL"/>
</dbReference>
<dbReference type="GO" id="GO:0001756">
    <property type="term" value="P:somitogenesis"/>
    <property type="evidence" value="ECO:0000316"/>
    <property type="project" value="MGI"/>
</dbReference>
<dbReference type="GO" id="GO:0048866">
    <property type="term" value="P:stem cell fate specification"/>
    <property type="evidence" value="ECO:0000316"/>
    <property type="project" value="MGI"/>
</dbReference>
<dbReference type="GO" id="GO:0090244">
    <property type="term" value="P:Wnt signaling pathway involved in somitogenesis"/>
    <property type="evidence" value="ECO:0000316"/>
    <property type="project" value="MGI"/>
</dbReference>
<dbReference type="CDD" id="cd07446">
    <property type="entry name" value="CRD_SFRP2"/>
    <property type="match status" value="1"/>
</dbReference>
<dbReference type="CDD" id="cd03580">
    <property type="entry name" value="NTR_Sfrp1_like"/>
    <property type="match status" value="1"/>
</dbReference>
<dbReference type="FunFam" id="2.40.50.120:FF:000006">
    <property type="entry name" value="Secreted frizzled-related protein 2"/>
    <property type="match status" value="1"/>
</dbReference>
<dbReference type="FunFam" id="1.10.2000.10:FF:000001">
    <property type="entry name" value="secreted frizzled-related protein 2"/>
    <property type="match status" value="1"/>
</dbReference>
<dbReference type="Gene3D" id="2.40.50.120">
    <property type="match status" value="1"/>
</dbReference>
<dbReference type="Gene3D" id="1.10.2000.10">
    <property type="entry name" value="Frizzled cysteine-rich domain"/>
    <property type="match status" value="1"/>
</dbReference>
<dbReference type="InterPro" id="IPR015526">
    <property type="entry name" value="Frizzled/SFRP"/>
</dbReference>
<dbReference type="InterPro" id="IPR020067">
    <property type="entry name" value="Frizzled_dom"/>
</dbReference>
<dbReference type="InterPro" id="IPR036790">
    <property type="entry name" value="Frizzled_dom_sf"/>
</dbReference>
<dbReference type="InterPro" id="IPR001134">
    <property type="entry name" value="Netrin_domain"/>
</dbReference>
<dbReference type="InterPro" id="IPR018933">
    <property type="entry name" value="Netrin_module_non-TIMP"/>
</dbReference>
<dbReference type="InterPro" id="IPR041764">
    <property type="entry name" value="SFRP2_CRD"/>
</dbReference>
<dbReference type="InterPro" id="IPR008993">
    <property type="entry name" value="TIMP-like_OB-fold"/>
</dbReference>
<dbReference type="PANTHER" id="PTHR11309">
    <property type="entry name" value="FRIZZLED"/>
    <property type="match status" value="1"/>
</dbReference>
<dbReference type="PANTHER" id="PTHR11309:SF45">
    <property type="entry name" value="SECRETED FRIZZLED-RELATED PROTEIN 2"/>
    <property type="match status" value="1"/>
</dbReference>
<dbReference type="Pfam" id="PF01392">
    <property type="entry name" value="Fz"/>
    <property type="match status" value="1"/>
</dbReference>
<dbReference type="Pfam" id="PF01759">
    <property type="entry name" value="NTR"/>
    <property type="match status" value="1"/>
</dbReference>
<dbReference type="SMART" id="SM00643">
    <property type="entry name" value="C345C"/>
    <property type="match status" value="1"/>
</dbReference>
<dbReference type="SMART" id="SM00063">
    <property type="entry name" value="FRI"/>
    <property type="match status" value="1"/>
</dbReference>
<dbReference type="SUPFAM" id="SSF63501">
    <property type="entry name" value="Frizzled cysteine-rich domain"/>
    <property type="match status" value="1"/>
</dbReference>
<dbReference type="SUPFAM" id="SSF50242">
    <property type="entry name" value="TIMP-like"/>
    <property type="match status" value="1"/>
</dbReference>
<dbReference type="PROSITE" id="PS50038">
    <property type="entry name" value="FZ"/>
    <property type="match status" value="1"/>
</dbReference>
<dbReference type="PROSITE" id="PS50189">
    <property type="entry name" value="NTR"/>
    <property type="match status" value="1"/>
</dbReference>
<gene>
    <name evidence="11" type="primary">Sfrp2</name>
    <name type="synonym">Sarp1</name>
    <name evidence="11" type="synonym">Sdf5</name>
</gene>
<feature type="signal peptide" evidence="2">
    <location>
        <begin position="1"/>
        <end position="24"/>
    </location>
</feature>
<feature type="chain" id="PRO_0000032543" description="Secreted frizzled-related protein 2">
    <location>
        <begin position="25"/>
        <end position="295"/>
    </location>
</feature>
<feature type="domain" description="FZ" evidence="3">
    <location>
        <begin position="35"/>
        <end position="155"/>
    </location>
</feature>
<feature type="domain" description="NTR" evidence="4">
    <location>
        <begin position="172"/>
        <end position="295"/>
    </location>
</feature>
<feature type="disulfide bond" evidence="1">
    <location>
        <begin position="40"/>
        <end position="103"/>
    </location>
</feature>
<feature type="disulfide bond" evidence="1">
    <location>
        <begin position="50"/>
        <end position="96"/>
    </location>
</feature>
<feature type="disulfide bond" evidence="1">
    <location>
        <begin position="87"/>
        <end position="125"/>
    </location>
</feature>
<feature type="disulfide bond" evidence="1">
    <location>
        <begin position="114"/>
        <end position="152"/>
    </location>
</feature>
<feature type="disulfide bond" evidence="1">
    <location>
        <begin position="118"/>
        <end position="142"/>
    </location>
</feature>
<feature type="disulfide bond" evidence="1">
    <location>
        <begin position="172"/>
        <end position="245"/>
    </location>
</feature>
<feature type="disulfide bond" evidence="1">
    <location>
        <begin position="175"/>
        <end position="247"/>
    </location>
</feature>
<feature type="disulfide bond" evidence="1">
    <location>
        <begin position="190"/>
        <end position="295"/>
    </location>
</feature>
<feature type="sequence conflict" description="In Ref. 3; AAB70795." evidence="10" ref="3">
    <original>S</original>
    <variation>T</variation>
    <location>
        <position position="38"/>
    </location>
</feature>
<feature type="sequence conflict" description="In Ref. 1; BAA09053." evidence="10" ref="1">
    <original>V</original>
    <variation>M</variation>
    <location>
        <position position="119"/>
    </location>
</feature>
<protein>
    <recommendedName>
        <fullName evidence="11">Secreted frizzled-related protein 2</fullName>
        <shortName>sFRP-2</shortName>
    </recommendedName>
    <alternativeName>
        <fullName>Protein SDF5</fullName>
    </alternativeName>
    <alternativeName>
        <fullName>Secreted apoptosis-related protein 1</fullName>
        <shortName evidence="9">SARP-1</shortName>
    </alternativeName>
</protein>
<sequence length="295" mass="33469">MPRGPASLLLLVLASHCCLGSARGLFLFGQPDFSYKRSNCKPIPANLQLCHGIEYQNMRLPNLLGHETMKEVLEQAGAWIPLVMKQCHPDTKKFLCSLFAPVCLDDLDETIQPCHSLCVQVKDRCAPVMSAFGFPWPDMLECDRFPQDNDLCIPLASSDHLLPATEEAPKVCEACKTKNEDDNDIMETLCKNDFALKIKVKEITYINRDTKIILETKSKTIYKLNGVSERDLKKSVLWLKDSLQCTCEEMNDINAPYLVMGQKQGGELVITSVKRWQKGQREFKRISRSIRKLQC</sequence>
<proteinExistence type="evidence at protein level"/>